<evidence type="ECO:0000255" key="1">
    <source>
        <dbReference type="HAMAP-Rule" id="MF_01637"/>
    </source>
</evidence>
<keyword id="KW-0004">4Fe-4S</keyword>
<keyword id="KW-0408">Iron</keyword>
<keyword id="KW-0411">Iron-sulfur</keyword>
<keyword id="KW-0479">Metal-binding</keyword>
<gene>
    <name evidence="1" type="primary">nfuA</name>
    <name type="ordered locus">SeSA_A3710</name>
</gene>
<proteinExistence type="inferred from homology"/>
<dbReference type="EMBL" id="CP001127">
    <property type="protein sequence ID" value="ACF90415.1"/>
    <property type="molecule type" value="Genomic_DNA"/>
</dbReference>
<dbReference type="RefSeq" id="WP_000619387.1">
    <property type="nucleotide sequence ID" value="NC_011094.1"/>
</dbReference>
<dbReference type="SMR" id="B4TY71"/>
<dbReference type="GeneID" id="66757844"/>
<dbReference type="KEGG" id="sew:SeSA_A3710"/>
<dbReference type="HOGENOM" id="CLU_094569_0_0_6"/>
<dbReference type="Proteomes" id="UP000001865">
    <property type="component" value="Chromosome"/>
</dbReference>
<dbReference type="GO" id="GO:0051539">
    <property type="term" value="F:4 iron, 4 sulfur cluster binding"/>
    <property type="evidence" value="ECO:0007669"/>
    <property type="project" value="UniProtKB-UniRule"/>
</dbReference>
<dbReference type="GO" id="GO:0005506">
    <property type="term" value="F:iron ion binding"/>
    <property type="evidence" value="ECO:0007669"/>
    <property type="project" value="InterPro"/>
</dbReference>
<dbReference type="GO" id="GO:0016226">
    <property type="term" value="P:iron-sulfur cluster assembly"/>
    <property type="evidence" value="ECO:0007669"/>
    <property type="project" value="UniProtKB-UniRule"/>
</dbReference>
<dbReference type="GO" id="GO:0051604">
    <property type="term" value="P:protein maturation"/>
    <property type="evidence" value="ECO:0007669"/>
    <property type="project" value="UniProtKB-UniRule"/>
</dbReference>
<dbReference type="FunFam" id="2.60.300.12:FF:000004">
    <property type="entry name" value="Fe/S biogenesis protein NfuA"/>
    <property type="match status" value="1"/>
</dbReference>
<dbReference type="FunFam" id="3.30.300.130:FF:000002">
    <property type="entry name" value="Fe/S biogenesis protein NfuA"/>
    <property type="match status" value="1"/>
</dbReference>
<dbReference type="Gene3D" id="3.30.300.130">
    <property type="entry name" value="Fe-S cluster assembly (FSCA)"/>
    <property type="match status" value="1"/>
</dbReference>
<dbReference type="Gene3D" id="2.60.300.12">
    <property type="entry name" value="HesB-like domain"/>
    <property type="match status" value="1"/>
</dbReference>
<dbReference type="HAMAP" id="MF_01637">
    <property type="entry name" value="Fe_S_biogen_NfuA"/>
    <property type="match status" value="1"/>
</dbReference>
<dbReference type="InterPro" id="IPR017726">
    <property type="entry name" value="Fe/S_biogenesis_protein_NfuA"/>
</dbReference>
<dbReference type="InterPro" id="IPR000361">
    <property type="entry name" value="FeS_biogenesis"/>
</dbReference>
<dbReference type="InterPro" id="IPR034904">
    <property type="entry name" value="FSCA_dom_sf"/>
</dbReference>
<dbReference type="InterPro" id="IPR035903">
    <property type="entry name" value="HesB-like_dom_sf"/>
</dbReference>
<dbReference type="InterPro" id="IPR001075">
    <property type="entry name" value="NIF_FeS_clus_asmbl_NifU_C"/>
</dbReference>
<dbReference type="NCBIfam" id="NF008392">
    <property type="entry name" value="PRK11190.1"/>
    <property type="match status" value="1"/>
</dbReference>
<dbReference type="NCBIfam" id="TIGR03341">
    <property type="entry name" value="YhgI_GntY"/>
    <property type="match status" value="1"/>
</dbReference>
<dbReference type="PANTHER" id="PTHR11178:SF51">
    <property type="entry name" value="FE_S BIOGENESIS PROTEIN NFUA"/>
    <property type="match status" value="1"/>
</dbReference>
<dbReference type="PANTHER" id="PTHR11178">
    <property type="entry name" value="IRON-SULFUR CLUSTER SCAFFOLD PROTEIN NFU-RELATED"/>
    <property type="match status" value="1"/>
</dbReference>
<dbReference type="Pfam" id="PF01521">
    <property type="entry name" value="Fe-S_biosyn"/>
    <property type="match status" value="1"/>
</dbReference>
<dbReference type="Pfam" id="PF01106">
    <property type="entry name" value="NifU"/>
    <property type="match status" value="1"/>
</dbReference>
<dbReference type="SUPFAM" id="SSF117916">
    <property type="entry name" value="Fe-S cluster assembly (FSCA) domain-like"/>
    <property type="match status" value="1"/>
</dbReference>
<dbReference type="SUPFAM" id="SSF89360">
    <property type="entry name" value="HesB-like domain"/>
    <property type="match status" value="1"/>
</dbReference>
<organism>
    <name type="scientific">Salmonella schwarzengrund (strain CVM19633)</name>
    <dbReference type="NCBI Taxonomy" id="439843"/>
    <lineage>
        <taxon>Bacteria</taxon>
        <taxon>Pseudomonadati</taxon>
        <taxon>Pseudomonadota</taxon>
        <taxon>Gammaproteobacteria</taxon>
        <taxon>Enterobacterales</taxon>
        <taxon>Enterobacteriaceae</taxon>
        <taxon>Salmonella</taxon>
    </lineage>
</organism>
<sequence length="191" mass="20938">MIRISDAAQAHFAKLLANQEEGTQIRVFVINPGTPNAECGVSYCPPDAVEATDTALKFDLLTAYVDELSAPYLEDAEIDFVTDQLGSQLTLKAPNAKMRKVADDAPLMERVEYALQSQINPQLAGHGGRVSLMEITDEGYAILQFGGGCNGCSMVDVTLKEGIEKQLLNEFPELKGVRDLTEHQRGEHSYY</sequence>
<comment type="function">
    <text evidence="1">Involved in iron-sulfur cluster biogenesis. Binds a 4Fe-4S cluster, can transfer this cluster to apoproteins, and thereby intervenes in the maturation of Fe/S proteins. Could also act as a scaffold/chaperone for damaged Fe/S proteins.</text>
</comment>
<comment type="cofactor">
    <cofactor evidence="1">
        <name>[4Fe-4S] cluster</name>
        <dbReference type="ChEBI" id="CHEBI:49883"/>
    </cofactor>
    <text evidence="1">Binds 1 [4Fe-4S] cluster per subunit. The cluster is presumably bound at the interface of two monomers.</text>
</comment>
<comment type="subunit">
    <text evidence="1">Homodimer.</text>
</comment>
<comment type="similarity">
    <text evidence="1">Belongs to the NfuA family.</text>
</comment>
<protein>
    <recommendedName>
        <fullName evidence="1">Fe/S biogenesis protein NfuA</fullName>
    </recommendedName>
</protein>
<name>NFUA_SALSV</name>
<accession>B4TY71</accession>
<feature type="chain" id="PRO_1000186778" description="Fe/S biogenesis protein NfuA">
    <location>
        <begin position="1"/>
        <end position="191"/>
    </location>
</feature>
<feature type="binding site" evidence="1">
    <location>
        <position position="149"/>
    </location>
    <ligand>
        <name>[4Fe-4S] cluster</name>
        <dbReference type="ChEBI" id="CHEBI:49883"/>
    </ligand>
</feature>
<feature type="binding site" evidence="1">
    <location>
        <position position="152"/>
    </location>
    <ligand>
        <name>[4Fe-4S] cluster</name>
        <dbReference type="ChEBI" id="CHEBI:49883"/>
    </ligand>
</feature>
<reference key="1">
    <citation type="journal article" date="2011" name="J. Bacteriol.">
        <title>Comparative genomics of 28 Salmonella enterica isolates: evidence for CRISPR-mediated adaptive sublineage evolution.</title>
        <authorList>
            <person name="Fricke W.F."/>
            <person name="Mammel M.K."/>
            <person name="McDermott P.F."/>
            <person name="Tartera C."/>
            <person name="White D.G."/>
            <person name="Leclerc J.E."/>
            <person name="Ravel J."/>
            <person name="Cebula T.A."/>
        </authorList>
    </citation>
    <scope>NUCLEOTIDE SEQUENCE [LARGE SCALE GENOMIC DNA]</scope>
    <source>
        <strain>CVM19633</strain>
    </source>
</reference>